<protein>
    <recommendedName>
        <fullName>UDP-glycosyltransferase 72D1</fullName>
        <ecNumber>2.4.1.-</ecNumber>
    </recommendedName>
</protein>
<comment type="similarity">
    <text evidence="2">Belongs to the UDP-glycosyltransferase family.</text>
</comment>
<proteinExistence type="evidence at transcript level"/>
<accession>Q9ZU72</accession>
<dbReference type="EC" id="2.4.1.-"/>
<dbReference type="EMBL" id="AC006135">
    <property type="protein sequence ID" value="AAD12210.1"/>
    <property type="molecule type" value="Genomic_DNA"/>
</dbReference>
<dbReference type="EMBL" id="CP002685">
    <property type="protein sequence ID" value="AEC06782.1"/>
    <property type="molecule type" value="Genomic_DNA"/>
</dbReference>
<dbReference type="EMBL" id="BX819387">
    <property type="status" value="NOT_ANNOTATED_CDS"/>
    <property type="molecule type" value="mRNA"/>
</dbReference>
<dbReference type="PIR" id="H84565">
    <property type="entry name" value="H84565"/>
</dbReference>
<dbReference type="RefSeq" id="NP_849978.2">
    <property type="nucleotide sequence ID" value="NM_179647.3"/>
</dbReference>
<dbReference type="SMR" id="Q9ZU72"/>
<dbReference type="FunCoup" id="Q9ZU72">
    <property type="interactions" value="197"/>
</dbReference>
<dbReference type="STRING" id="3702.Q9ZU72"/>
<dbReference type="CAZy" id="GT1">
    <property type="family name" value="Glycosyltransferase Family 1"/>
</dbReference>
<dbReference type="PaxDb" id="3702-AT2G18570.1"/>
<dbReference type="ProteomicsDB" id="228619"/>
<dbReference type="EnsemblPlants" id="AT2G18570.1">
    <property type="protein sequence ID" value="AT2G18570.1"/>
    <property type="gene ID" value="AT2G18570"/>
</dbReference>
<dbReference type="GeneID" id="816372"/>
<dbReference type="Gramene" id="AT2G18570.1">
    <property type="protein sequence ID" value="AT2G18570.1"/>
    <property type="gene ID" value="AT2G18570"/>
</dbReference>
<dbReference type="KEGG" id="ath:AT2G18570"/>
<dbReference type="Araport" id="AT2G18570"/>
<dbReference type="TAIR" id="AT2G18570"/>
<dbReference type="eggNOG" id="KOG1192">
    <property type="taxonomic scope" value="Eukaryota"/>
</dbReference>
<dbReference type="HOGENOM" id="CLU_001724_3_2_1"/>
<dbReference type="InParanoid" id="Q9ZU72"/>
<dbReference type="OMA" id="MVRKIMV"/>
<dbReference type="OrthoDB" id="5835829at2759"/>
<dbReference type="PhylomeDB" id="Q9ZU72"/>
<dbReference type="BioCyc" id="ARA:AT2G18570-MONOMER"/>
<dbReference type="PRO" id="PR:Q9ZU72"/>
<dbReference type="Proteomes" id="UP000006548">
    <property type="component" value="Chromosome 2"/>
</dbReference>
<dbReference type="ExpressionAtlas" id="Q9ZU72">
    <property type="expression patterns" value="baseline and differential"/>
</dbReference>
<dbReference type="GO" id="GO:0008194">
    <property type="term" value="F:UDP-glycosyltransferase activity"/>
    <property type="evidence" value="ECO:0007669"/>
    <property type="project" value="InterPro"/>
</dbReference>
<dbReference type="CDD" id="cd03784">
    <property type="entry name" value="GT1_Gtf-like"/>
    <property type="match status" value="1"/>
</dbReference>
<dbReference type="FunFam" id="3.40.50.2000:FF:000346">
    <property type="entry name" value="Glycosyltransferase"/>
    <property type="match status" value="1"/>
</dbReference>
<dbReference type="Gene3D" id="3.40.50.2000">
    <property type="entry name" value="Glycogen Phosphorylase B"/>
    <property type="match status" value="2"/>
</dbReference>
<dbReference type="InterPro" id="IPR002213">
    <property type="entry name" value="UDP_glucos_trans"/>
</dbReference>
<dbReference type="InterPro" id="IPR035595">
    <property type="entry name" value="UDP_glycos_trans_CS"/>
</dbReference>
<dbReference type="PANTHER" id="PTHR48046:SF1">
    <property type="entry name" value="GLYCOSYLTRANSFERASE-RELATED"/>
    <property type="match status" value="1"/>
</dbReference>
<dbReference type="PANTHER" id="PTHR48046">
    <property type="entry name" value="UDP-GLYCOSYLTRANSFERASE 72E1"/>
    <property type="match status" value="1"/>
</dbReference>
<dbReference type="Pfam" id="PF00201">
    <property type="entry name" value="UDPGT"/>
    <property type="match status" value="1"/>
</dbReference>
<dbReference type="SUPFAM" id="SSF53756">
    <property type="entry name" value="UDP-Glycosyltransferase/glycogen phosphorylase"/>
    <property type="match status" value="1"/>
</dbReference>
<dbReference type="PROSITE" id="PS00375">
    <property type="entry name" value="UDPGT"/>
    <property type="match status" value="1"/>
</dbReference>
<sequence>MDQPHALLVASPGLGHLIPILELGNRLSSVLNIHVTILAVTSGSSSPTETEAIHAAAARTICQITEIPSVDVDNLVEPDATIFTKMVVKMRAMKPAVRDAVKLMKRKPTVMIVDFLGTELMSVADDVGMTAKYVYVPTHAWFLAVMVYLPVLDTVVEGEYVDIKEPLKIPGCKPVGPKELMETMLDRSGQQYKECVRAGLEVPMSDGVLVNTWEELQGNTLAALREDEELSRVMKVPVYPIGPIVRTNQHVDKPNSIFEWLDEQRERSVVFVCLGSGGTLTFEQTVELALGLELSGQRFVWVLRRPASYLGAISSDDEQVSASLPEGFLDRTRGVGIVVTQWAPQVEILSHRSIGGFLSHCGWSSALESLTKGVPIIAWPLYAEQWMNATLLTEEIGVAVRTSELPSERVIGREEVASLVRKIMAEEDEEGQKIRAKAEEVRVSSERAWSKDGSSYNSLFEWAKRCYLVP</sequence>
<evidence type="ECO:0000250" key="1"/>
<evidence type="ECO:0000305" key="2"/>
<name>U72D1_ARATH</name>
<reference key="1">
    <citation type="journal article" date="1999" name="Nature">
        <title>Sequence and analysis of chromosome 2 of the plant Arabidopsis thaliana.</title>
        <authorList>
            <person name="Lin X."/>
            <person name="Kaul S."/>
            <person name="Rounsley S.D."/>
            <person name="Shea T.P."/>
            <person name="Benito M.-I."/>
            <person name="Town C.D."/>
            <person name="Fujii C.Y."/>
            <person name="Mason T.M."/>
            <person name="Bowman C.L."/>
            <person name="Barnstead M.E."/>
            <person name="Feldblyum T.V."/>
            <person name="Buell C.R."/>
            <person name="Ketchum K.A."/>
            <person name="Lee J.J."/>
            <person name="Ronning C.M."/>
            <person name="Koo H.L."/>
            <person name="Moffat K.S."/>
            <person name="Cronin L.A."/>
            <person name="Shen M."/>
            <person name="Pai G."/>
            <person name="Van Aken S."/>
            <person name="Umayam L."/>
            <person name="Tallon L.J."/>
            <person name="Gill J.E."/>
            <person name="Adams M.D."/>
            <person name="Carrera A.J."/>
            <person name="Creasy T.H."/>
            <person name="Goodman H.M."/>
            <person name="Somerville C.R."/>
            <person name="Copenhaver G.P."/>
            <person name="Preuss D."/>
            <person name="Nierman W.C."/>
            <person name="White O."/>
            <person name="Eisen J.A."/>
            <person name="Salzberg S.L."/>
            <person name="Fraser C.M."/>
            <person name="Venter J.C."/>
        </authorList>
    </citation>
    <scope>NUCLEOTIDE SEQUENCE [LARGE SCALE GENOMIC DNA]</scope>
    <source>
        <strain>cv. Columbia</strain>
    </source>
</reference>
<reference key="2">
    <citation type="journal article" date="2017" name="Plant J.">
        <title>Araport11: a complete reannotation of the Arabidopsis thaliana reference genome.</title>
        <authorList>
            <person name="Cheng C.Y."/>
            <person name="Krishnakumar V."/>
            <person name="Chan A.P."/>
            <person name="Thibaud-Nissen F."/>
            <person name="Schobel S."/>
            <person name="Town C.D."/>
        </authorList>
    </citation>
    <scope>GENOME REANNOTATION</scope>
    <source>
        <strain>cv. Columbia</strain>
    </source>
</reference>
<reference key="3">
    <citation type="journal article" date="2004" name="Genome Res.">
        <title>Whole genome sequence comparisons and 'full-length' cDNA sequences: a combined approach to evaluate and improve Arabidopsis genome annotation.</title>
        <authorList>
            <person name="Castelli V."/>
            <person name="Aury J.-M."/>
            <person name="Jaillon O."/>
            <person name="Wincker P."/>
            <person name="Clepet C."/>
            <person name="Menard M."/>
            <person name="Cruaud C."/>
            <person name="Quetier F."/>
            <person name="Scarpelli C."/>
            <person name="Schaechter V."/>
            <person name="Temple G."/>
            <person name="Caboche M."/>
            <person name="Weissenbach J."/>
            <person name="Salanoubat M."/>
        </authorList>
    </citation>
    <scope>NUCLEOTIDE SEQUENCE [LARGE SCALE MRNA]</scope>
    <source>
        <strain>cv. Columbia</strain>
    </source>
</reference>
<reference key="4">
    <citation type="journal article" date="2001" name="J. Biol. Chem.">
        <title>Phylogenetic analysis of the UDP-glycosyltransferase multigene family of Arabidopsis thaliana.</title>
        <authorList>
            <person name="Li Y."/>
            <person name="Baldauf S."/>
            <person name="Lim E.K."/>
            <person name="Bowles D.J."/>
        </authorList>
    </citation>
    <scope>GENE FAMILY</scope>
</reference>
<feature type="chain" id="PRO_0000409072" description="UDP-glycosyltransferase 72D1">
    <location>
        <begin position="1"/>
        <end position="470"/>
    </location>
</feature>
<feature type="binding site" evidence="1">
    <location>
        <position position="276"/>
    </location>
    <ligand>
        <name>UDP-alpha-D-glucose</name>
        <dbReference type="ChEBI" id="CHEBI:58885"/>
    </ligand>
</feature>
<feature type="binding site" evidence="1">
    <location>
        <begin position="343"/>
        <end position="345"/>
    </location>
    <ligand>
        <name>UDP-alpha-D-glucose</name>
        <dbReference type="ChEBI" id="CHEBI:58885"/>
    </ligand>
</feature>
<feature type="binding site" evidence="1">
    <location>
        <begin position="360"/>
        <end position="368"/>
    </location>
    <ligand>
        <name>UDP-alpha-D-glucose</name>
        <dbReference type="ChEBI" id="CHEBI:58885"/>
    </ligand>
</feature>
<feature type="binding site" evidence="1">
    <location>
        <begin position="382"/>
        <end position="385"/>
    </location>
    <ligand>
        <name>UDP-alpha-D-glucose</name>
        <dbReference type="ChEBI" id="CHEBI:58885"/>
    </ligand>
</feature>
<feature type="sequence conflict" description="In Ref. 3; BX819387." evidence="2" ref="3">
    <original>V</original>
    <variation>L</variation>
    <location>
        <position position="196"/>
    </location>
</feature>
<feature type="sequence conflict" description="In Ref. 3; BX819387." evidence="2" ref="3">
    <original>E</original>
    <variation>A</variation>
    <location>
        <position position="287"/>
    </location>
</feature>
<keyword id="KW-0328">Glycosyltransferase</keyword>
<keyword id="KW-1185">Reference proteome</keyword>
<keyword id="KW-0808">Transferase</keyword>
<organism>
    <name type="scientific">Arabidopsis thaliana</name>
    <name type="common">Mouse-ear cress</name>
    <dbReference type="NCBI Taxonomy" id="3702"/>
    <lineage>
        <taxon>Eukaryota</taxon>
        <taxon>Viridiplantae</taxon>
        <taxon>Streptophyta</taxon>
        <taxon>Embryophyta</taxon>
        <taxon>Tracheophyta</taxon>
        <taxon>Spermatophyta</taxon>
        <taxon>Magnoliopsida</taxon>
        <taxon>eudicotyledons</taxon>
        <taxon>Gunneridae</taxon>
        <taxon>Pentapetalae</taxon>
        <taxon>rosids</taxon>
        <taxon>malvids</taxon>
        <taxon>Brassicales</taxon>
        <taxon>Brassicaceae</taxon>
        <taxon>Camelineae</taxon>
        <taxon>Arabidopsis</taxon>
    </lineage>
</organism>
<gene>
    <name type="primary">UGT72D1</name>
    <name type="ordered locus">At2g18570</name>
    <name type="ORF">F24H14.8</name>
</gene>